<name>ACCO_DIOKA</name>
<evidence type="ECO:0000250" key="1"/>
<evidence type="ECO:0000255" key="2">
    <source>
        <dbReference type="PROSITE-ProRule" id="PRU00805"/>
    </source>
</evidence>
<evidence type="ECO:0000305" key="3"/>
<gene>
    <name type="primary">DK-ACO1</name>
</gene>
<proteinExistence type="evidence at transcript level"/>
<sequence length="318" mass="36038">MESFPVINMEKMNGEERAATMGLINDACENWGFFELVNHGIPPELMDTVERVTKAHYKKCMEQRFKELVASKALEGIQAEVTDMDWESTYFLRHLPQSNISEVPDLDEEYRRVMKDFAERLEKLAEYLLDLLCENLGLEKGYLKKAFYGTKGPNFGTKVANYPPCPKADLIKGLRAHTDAGGIILLFQDDKVSGLQLLKDDQWIDVPPMKHSIVINLGDQLEVITNGKYKSVLHRVVAQTDGTRMSIASFYNPGNDAVIYPAPALVEKEVEEKEVYPKFVFDDYMKLYAALKFQAKEPRFEAMKAVEANVNLGPIATV</sequence>
<reference key="1">
    <citation type="journal article" date="2003" name="Plant Physiol.">
        <title>Ethylene biosynthesis in detached young persimmon fruit is initiated in calyx and modulated by water loss from the fruit.</title>
        <authorList>
            <person name="Nakano R."/>
            <person name="Ogura E."/>
            <person name="Kubo Y."/>
            <person name="Inaba A."/>
        </authorList>
    </citation>
    <scope>NUCLEOTIDE SEQUENCE [MRNA]</scope>
    <source>
        <strain>cv. Hiratanenashi</strain>
    </source>
</reference>
<organism>
    <name type="scientific">Diospyros kaki</name>
    <name type="common">Kaki persimmon</name>
    <name type="synonym">Diospyros chinensis</name>
    <dbReference type="NCBI Taxonomy" id="35925"/>
    <lineage>
        <taxon>Eukaryota</taxon>
        <taxon>Viridiplantae</taxon>
        <taxon>Streptophyta</taxon>
        <taxon>Embryophyta</taxon>
        <taxon>Tracheophyta</taxon>
        <taxon>Spermatophyta</taxon>
        <taxon>Magnoliopsida</taxon>
        <taxon>eudicotyledons</taxon>
        <taxon>Gunneridae</taxon>
        <taxon>Pentapetalae</taxon>
        <taxon>asterids</taxon>
        <taxon>Ericales</taxon>
        <taxon>Ebenaceae</taxon>
        <taxon>Diospyros</taxon>
    </lineage>
</organism>
<comment type="catalytic activity">
    <reaction>
        <text>1-aminocyclopropane-1-carboxylate + L-ascorbate + O2 = ethene + L-dehydroascorbate + hydrogen cyanide + CO2 + 2 H2O</text>
        <dbReference type="Rhea" id="RHEA:23640"/>
        <dbReference type="ChEBI" id="CHEBI:15377"/>
        <dbReference type="ChEBI" id="CHEBI:15379"/>
        <dbReference type="ChEBI" id="CHEBI:16526"/>
        <dbReference type="ChEBI" id="CHEBI:18153"/>
        <dbReference type="ChEBI" id="CHEBI:18407"/>
        <dbReference type="ChEBI" id="CHEBI:38290"/>
        <dbReference type="ChEBI" id="CHEBI:58360"/>
        <dbReference type="ChEBI" id="CHEBI:58539"/>
        <dbReference type="EC" id="1.14.17.4"/>
    </reaction>
</comment>
<comment type="cofactor">
    <cofactor evidence="1">
        <name>Fe cation</name>
        <dbReference type="ChEBI" id="CHEBI:24875"/>
    </cofactor>
</comment>
<comment type="pathway">
    <text>Alkene biosynthesis; ethylene biosynthesis via S-adenosyl-L-methionine; ethylene from S-adenosyl-L-methionine: step 2/2.</text>
</comment>
<comment type="induction">
    <text>By water stress.</text>
</comment>
<comment type="similarity">
    <text evidence="3">Belongs to the iron/ascorbate-dependent oxidoreductase family.</text>
</comment>
<protein>
    <recommendedName>
        <fullName>1-aminocyclopropane-1-carboxylate oxidase</fullName>
        <shortName>ACC oxidase</shortName>
        <ecNumber>1.14.17.4</ecNumber>
    </recommendedName>
    <alternativeName>
        <fullName>Ethylene-forming enzyme</fullName>
        <shortName>EFE</shortName>
    </alternativeName>
</protein>
<keyword id="KW-0266">Ethylene biosynthesis</keyword>
<keyword id="KW-0292">Fruit ripening</keyword>
<keyword id="KW-0408">Iron</keyword>
<keyword id="KW-0479">Metal-binding</keyword>
<keyword id="KW-0560">Oxidoreductase</keyword>
<keyword id="KW-0346">Stress response</keyword>
<keyword id="KW-0847">Vitamin C</keyword>
<feature type="chain" id="PRO_0000067258" description="1-aminocyclopropane-1-carboxylate oxidase">
    <location>
        <begin position="1"/>
        <end position="318"/>
    </location>
</feature>
<feature type="domain" description="Fe2OG dioxygenase" evidence="2">
    <location>
        <begin position="153"/>
        <end position="253"/>
    </location>
</feature>
<feature type="binding site" evidence="2">
    <location>
        <position position="177"/>
    </location>
    <ligand>
        <name>Fe cation</name>
        <dbReference type="ChEBI" id="CHEBI:24875"/>
    </ligand>
</feature>
<feature type="binding site" evidence="2">
    <location>
        <position position="179"/>
    </location>
    <ligand>
        <name>Fe cation</name>
        <dbReference type="ChEBI" id="CHEBI:24875"/>
    </ligand>
</feature>
<feature type="binding site" evidence="2">
    <location>
        <position position="234"/>
    </location>
    <ligand>
        <name>Fe cation</name>
        <dbReference type="ChEBI" id="CHEBI:24875"/>
    </ligand>
</feature>
<accession>Q8S932</accession>
<dbReference type="EC" id="1.14.17.4"/>
<dbReference type="EMBL" id="AB073008">
    <property type="protein sequence ID" value="BAB89351.1"/>
    <property type="molecule type" value="mRNA"/>
</dbReference>
<dbReference type="SMR" id="Q8S932"/>
<dbReference type="UniPathway" id="UPA00384">
    <property type="reaction ID" value="UER00563"/>
</dbReference>
<dbReference type="GO" id="GO:0009815">
    <property type="term" value="F:1-aminocyclopropane-1-carboxylate oxidase activity"/>
    <property type="evidence" value="ECO:0007669"/>
    <property type="project" value="UniProtKB-EC"/>
</dbReference>
<dbReference type="GO" id="GO:0031418">
    <property type="term" value="F:L-ascorbic acid binding"/>
    <property type="evidence" value="ECO:0007669"/>
    <property type="project" value="UniProtKB-KW"/>
</dbReference>
<dbReference type="GO" id="GO:0046872">
    <property type="term" value="F:metal ion binding"/>
    <property type="evidence" value="ECO:0007669"/>
    <property type="project" value="UniProtKB-KW"/>
</dbReference>
<dbReference type="GO" id="GO:0009693">
    <property type="term" value="P:ethylene biosynthetic process"/>
    <property type="evidence" value="ECO:0007669"/>
    <property type="project" value="UniProtKB-UniPathway"/>
</dbReference>
<dbReference type="GO" id="GO:0009835">
    <property type="term" value="P:fruit ripening"/>
    <property type="evidence" value="ECO:0007669"/>
    <property type="project" value="UniProtKB-KW"/>
</dbReference>
<dbReference type="FunFam" id="2.60.120.330:FF:000002">
    <property type="entry name" value="1-aminocyclopropane-1-carboxylate oxidase 1"/>
    <property type="match status" value="1"/>
</dbReference>
<dbReference type="Gene3D" id="2.60.120.330">
    <property type="entry name" value="B-lactam Antibiotic, Isopenicillin N Synthase, Chain"/>
    <property type="match status" value="1"/>
</dbReference>
<dbReference type="InterPro" id="IPR026992">
    <property type="entry name" value="DIOX_N"/>
</dbReference>
<dbReference type="InterPro" id="IPR044861">
    <property type="entry name" value="IPNS-like_FE2OG_OXY"/>
</dbReference>
<dbReference type="InterPro" id="IPR027443">
    <property type="entry name" value="IPNS-like_sf"/>
</dbReference>
<dbReference type="InterPro" id="IPR005123">
    <property type="entry name" value="Oxoglu/Fe-dep_dioxygenase_dom"/>
</dbReference>
<dbReference type="InterPro" id="IPR050295">
    <property type="entry name" value="Plant_2OG-oxidoreductases"/>
</dbReference>
<dbReference type="PANTHER" id="PTHR47991">
    <property type="entry name" value="OXOGLUTARATE/IRON-DEPENDENT DIOXYGENASE"/>
    <property type="match status" value="1"/>
</dbReference>
<dbReference type="Pfam" id="PF03171">
    <property type="entry name" value="2OG-FeII_Oxy"/>
    <property type="match status" value="1"/>
</dbReference>
<dbReference type="Pfam" id="PF14226">
    <property type="entry name" value="DIOX_N"/>
    <property type="match status" value="1"/>
</dbReference>
<dbReference type="SUPFAM" id="SSF51197">
    <property type="entry name" value="Clavaminate synthase-like"/>
    <property type="match status" value="1"/>
</dbReference>
<dbReference type="PROSITE" id="PS51471">
    <property type="entry name" value="FE2OG_OXY"/>
    <property type="match status" value="1"/>
</dbReference>